<evidence type="ECO:0000250" key="1"/>
<evidence type="ECO:0000255" key="2">
    <source>
        <dbReference type="PROSITE-ProRule" id="PRU00808"/>
    </source>
</evidence>
<evidence type="ECO:0000269" key="3">
    <source>
    </source>
</evidence>
<sequence>MSNLDFCTIYTTTGQIDQLSYAQKAADSGDTCIGMKSKHGVVLLAEKPRVSPLYILESDEKIRKIGNTIGVVCTGMSSDTFYVGCAIKDYVFHHKENFNEDPTPGMMKVYLNDIFHYFTRGINLRVLGANTLTSVYKDGSFSLLHTDCSGKTLSYKAACIGKGTRRIKTELEKLDIDTMTIEEMVDVGVKVLYMAHDPSKDKEFDIEIGIASMETGGDLRKLENHEIRPLVGKYKHISVDED</sequence>
<accession>Q8SQP9</accession>
<protein>
    <recommendedName>
        <fullName>Probable proteasome subunit alpha type-7</fullName>
    </recommendedName>
    <alternativeName>
        <fullName>26S proteasome alpha-type subunit PRE10</fullName>
    </alternativeName>
    <alternativeName>
        <fullName>Multicatalytic endopeptidase complex subunit PRE10</fullName>
    </alternativeName>
</protein>
<proteinExistence type="evidence at protein level"/>
<feature type="chain" id="PRO_0000382754" description="Probable proteasome subunit alpha type-7">
    <location>
        <begin position="1"/>
        <end position="242"/>
    </location>
</feature>
<comment type="function">
    <text evidence="1">The proteasome degrades poly-ubiquitinated proteins in the cytoplasm and in the nucleus. It is essential for the regulated turnover of proteins and for the removal of misfolded proteins. The proteasome is a multicatalytic proteinase complex that is characterized by its ability to cleave peptides with Arg, Phe, Tyr, Leu, and Glu adjacent to the leaving group at neutral or slightly basic pH. It has an ATP-dependent proteolytic activity (By similarity).</text>
</comment>
<comment type="subunit">
    <text evidence="1">The 26S proteasome consists of a 20S proteasome core and two 19S regulatory subunits. The 20S proteasome core is composed of 28 subunits that are arranged in four stacked rings, resulting in a barrel-shaped structure. The two end rings are each formed by seven alpha subunits, and the two central rings are each formed by seven beta subunits. The catalytic chamber with the active sites is on the inside of the barrel (By similarity).</text>
</comment>
<comment type="subcellular location">
    <subcellularLocation>
        <location evidence="1">Cytoplasm</location>
    </subcellularLocation>
    <subcellularLocation>
        <location evidence="1">Nucleus</location>
    </subcellularLocation>
</comment>
<comment type="developmental stage">
    <text evidence="3">Expressed in late sporogonial stages.</text>
</comment>
<comment type="similarity">
    <text evidence="2">Belongs to the peptidase T1A family.</text>
</comment>
<organism>
    <name type="scientific">Encephalitozoon cuniculi (strain GB-M1)</name>
    <name type="common">Microsporidian parasite</name>
    <dbReference type="NCBI Taxonomy" id="284813"/>
    <lineage>
        <taxon>Eukaryota</taxon>
        <taxon>Fungi</taxon>
        <taxon>Fungi incertae sedis</taxon>
        <taxon>Microsporidia</taxon>
        <taxon>Unikaryonidae</taxon>
        <taxon>Encephalitozoon</taxon>
    </lineage>
</organism>
<reference key="1">
    <citation type="journal article" date="2001" name="Nature">
        <title>Genome sequence and gene compaction of the eukaryote parasite Encephalitozoon cuniculi.</title>
        <authorList>
            <person name="Katinka M.D."/>
            <person name="Duprat S."/>
            <person name="Cornillot E."/>
            <person name="Metenier G."/>
            <person name="Thomarat F."/>
            <person name="Prensier G."/>
            <person name="Barbe V."/>
            <person name="Peyretaillade E."/>
            <person name="Brottier P."/>
            <person name="Wincker P."/>
            <person name="Delbac F."/>
            <person name="El Alaoui H."/>
            <person name="Peyret P."/>
            <person name="Saurin W."/>
            <person name="Gouy M."/>
            <person name="Weissenbach J."/>
            <person name="Vivares C.P."/>
        </authorList>
    </citation>
    <scope>NUCLEOTIDE SEQUENCE [LARGE SCALE GENOMIC DNA]</scope>
    <source>
        <strain>GB-M1</strain>
    </source>
</reference>
<reference key="2">
    <citation type="journal article" date="2006" name="Proteomics">
        <title>Proteomic analysis of the eukaryotic parasite Encephalitozoon cuniculi (microsporidia): a reference map for proteins expressed in late sporogonial stages.</title>
        <authorList>
            <person name="Brosson D."/>
            <person name="Kuhn L."/>
            <person name="Delbac F."/>
            <person name="Garin J."/>
            <person name="Vivares C.P."/>
            <person name="Texier C."/>
        </authorList>
    </citation>
    <scope>IDENTIFICATION BY MASS SPECTROMETRY [LARGE SCALE ANALYSIS]</scope>
    <scope>DEVELOPMENTAL STAGE</scope>
</reference>
<gene>
    <name type="primary">PRE10</name>
    <name type="ordered locus">ECU09_0330</name>
</gene>
<name>PSA7_ENCCU</name>
<keyword id="KW-0963">Cytoplasm</keyword>
<keyword id="KW-0539">Nucleus</keyword>
<keyword id="KW-0647">Proteasome</keyword>
<keyword id="KW-1185">Reference proteome</keyword>
<dbReference type="EMBL" id="AL590451">
    <property type="protein sequence ID" value="CAD27004.1"/>
    <property type="molecule type" value="Genomic_DNA"/>
</dbReference>
<dbReference type="RefSeq" id="XP_955585.1">
    <property type="nucleotide sequence ID" value="XM_950492.1"/>
</dbReference>
<dbReference type="SMR" id="Q8SQP9"/>
<dbReference type="FunCoup" id="Q8SQP9">
    <property type="interactions" value="312"/>
</dbReference>
<dbReference type="STRING" id="284813.Q8SQP9"/>
<dbReference type="VEuPathDB" id="MicrosporidiaDB:ECU09_0330"/>
<dbReference type="HOGENOM" id="CLU_035750_0_0_1"/>
<dbReference type="InParanoid" id="Q8SQP9"/>
<dbReference type="OMA" id="RVSMYMH"/>
<dbReference type="OrthoDB" id="40134at2759"/>
<dbReference type="Proteomes" id="UP000000819">
    <property type="component" value="Chromosome IX"/>
</dbReference>
<dbReference type="GO" id="GO:0005737">
    <property type="term" value="C:cytoplasm"/>
    <property type="evidence" value="ECO:0007669"/>
    <property type="project" value="UniProtKB-SubCell"/>
</dbReference>
<dbReference type="GO" id="GO:0005634">
    <property type="term" value="C:nucleus"/>
    <property type="evidence" value="ECO:0007669"/>
    <property type="project" value="UniProtKB-SubCell"/>
</dbReference>
<dbReference type="GO" id="GO:0019773">
    <property type="term" value="C:proteasome core complex, alpha-subunit complex"/>
    <property type="evidence" value="ECO:0000250"/>
    <property type="project" value="UniProtKB"/>
</dbReference>
<dbReference type="GO" id="GO:0051603">
    <property type="term" value="P:proteolysis involved in protein catabolic process"/>
    <property type="evidence" value="ECO:0007669"/>
    <property type="project" value="InterPro"/>
</dbReference>
<dbReference type="Gene3D" id="3.60.20.10">
    <property type="entry name" value="Glutamine Phosphoribosylpyrophosphate, subunit 1, domain 1"/>
    <property type="match status" value="1"/>
</dbReference>
<dbReference type="InterPro" id="IPR029055">
    <property type="entry name" value="Ntn_hydrolases_N"/>
</dbReference>
<dbReference type="InterPro" id="IPR050115">
    <property type="entry name" value="Proteasome_alpha"/>
</dbReference>
<dbReference type="InterPro" id="IPR023332">
    <property type="entry name" value="Proteasome_alpha-type"/>
</dbReference>
<dbReference type="InterPro" id="IPR001353">
    <property type="entry name" value="Proteasome_sua/b"/>
</dbReference>
<dbReference type="PANTHER" id="PTHR11599">
    <property type="entry name" value="PROTEASOME SUBUNIT ALPHA/BETA"/>
    <property type="match status" value="1"/>
</dbReference>
<dbReference type="Pfam" id="PF00227">
    <property type="entry name" value="Proteasome"/>
    <property type="match status" value="1"/>
</dbReference>
<dbReference type="SUPFAM" id="SSF56235">
    <property type="entry name" value="N-terminal nucleophile aminohydrolases (Ntn hydrolases)"/>
    <property type="match status" value="1"/>
</dbReference>
<dbReference type="PROSITE" id="PS51475">
    <property type="entry name" value="PROTEASOME_ALPHA_2"/>
    <property type="match status" value="1"/>
</dbReference>